<organism>
    <name type="scientific">Saccharomyces cerevisiae (strain ATCC 204508 / S288c)</name>
    <name type="common">Baker's yeast</name>
    <dbReference type="NCBI Taxonomy" id="559292"/>
    <lineage>
        <taxon>Eukaryota</taxon>
        <taxon>Fungi</taxon>
        <taxon>Dikarya</taxon>
        <taxon>Ascomycota</taxon>
        <taxon>Saccharomycotina</taxon>
        <taxon>Saccharomycetes</taxon>
        <taxon>Saccharomycetales</taxon>
        <taxon>Saccharomycetaceae</taxon>
        <taxon>Saccharomyces</taxon>
    </lineage>
</organism>
<keyword id="KW-0963">Cytoplasm</keyword>
<keyword id="KW-0206">Cytoskeleton</keyword>
<keyword id="KW-0325">Glycoprotein</keyword>
<keyword id="KW-0597">Phosphoprotein</keyword>
<keyword id="KW-1185">Reference proteome</keyword>
<keyword id="KW-0677">Repeat</keyword>
<protein>
    <recommendedName>
        <fullName>Verprolin</fullName>
    </recommendedName>
</protein>
<accession>P37370</accession>
<accession>D6VYX7</accession>
<accession>Q06133</accession>
<feature type="chain" id="PRO_0000065929" description="Verprolin">
    <location>
        <begin position="1"/>
        <end position="817"/>
    </location>
</feature>
<feature type="domain" description="WH2 1" evidence="2">
    <location>
        <begin position="30"/>
        <end position="47"/>
    </location>
</feature>
<feature type="domain" description="WH2 2" evidence="2">
    <location>
        <begin position="87"/>
        <end position="106"/>
    </location>
</feature>
<feature type="region of interest" description="Disordered" evidence="3">
    <location>
        <begin position="1"/>
        <end position="752"/>
    </location>
</feature>
<feature type="region of interest" description="Disordered" evidence="3">
    <location>
        <begin position="786"/>
        <end position="806"/>
    </location>
</feature>
<feature type="compositionally biased region" description="Pro residues" evidence="3">
    <location>
        <begin position="1"/>
        <end position="15"/>
    </location>
</feature>
<feature type="compositionally biased region" description="Basic and acidic residues" evidence="3">
    <location>
        <begin position="37"/>
        <end position="51"/>
    </location>
</feature>
<feature type="compositionally biased region" description="Low complexity" evidence="3">
    <location>
        <begin position="62"/>
        <end position="79"/>
    </location>
</feature>
<feature type="compositionally biased region" description="Pro residues" evidence="3">
    <location>
        <begin position="119"/>
        <end position="180"/>
    </location>
</feature>
<feature type="compositionally biased region" description="Pro residues" evidence="3">
    <location>
        <begin position="236"/>
        <end position="245"/>
    </location>
</feature>
<feature type="compositionally biased region" description="Polar residues" evidence="3">
    <location>
        <begin position="254"/>
        <end position="265"/>
    </location>
</feature>
<feature type="compositionally biased region" description="Pro residues" evidence="3">
    <location>
        <begin position="306"/>
        <end position="335"/>
    </location>
</feature>
<feature type="compositionally biased region" description="Low complexity" evidence="3">
    <location>
        <begin position="336"/>
        <end position="348"/>
    </location>
</feature>
<feature type="compositionally biased region" description="Pro residues" evidence="3">
    <location>
        <begin position="372"/>
        <end position="382"/>
    </location>
</feature>
<feature type="compositionally biased region" description="Low complexity" evidence="3">
    <location>
        <begin position="383"/>
        <end position="395"/>
    </location>
</feature>
<feature type="compositionally biased region" description="Pro residues" evidence="3">
    <location>
        <begin position="396"/>
        <end position="407"/>
    </location>
</feature>
<feature type="compositionally biased region" description="Low complexity" evidence="3">
    <location>
        <begin position="408"/>
        <end position="422"/>
    </location>
</feature>
<feature type="compositionally biased region" description="Pro residues" evidence="3">
    <location>
        <begin position="423"/>
        <end position="432"/>
    </location>
</feature>
<feature type="compositionally biased region" description="Low complexity" evidence="3">
    <location>
        <begin position="447"/>
        <end position="469"/>
    </location>
</feature>
<feature type="compositionally biased region" description="Basic and acidic residues" evidence="3">
    <location>
        <begin position="502"/>
        <end position="516"/>
    </location>
</feature>
<feature type="compositionally biased region" description="Low complexity" evidence="3">
    <location>
        <begin position="518"/>
        <end position="534"/>
    </location>
</feature>
<feature type="compositionally biased region" description="Pro residues" evidence="3">
    <location>
        <begin position="557"/>
        <end position="579"/>
    </location>
</feature>
<feature type="compositionally biased region" description="Basic and acidic residues" evidence="3">
    <location>
        <begin position="588"/>
        <end position="597"/>
    </location>
</feature>
<feature type="compositionally biased region" description="Pro residues" evidence="3">
    <location>
        <begin position="649"/>
        <end position="661"/>
    </location>
</feature>
<feature type="compositionally biased region" description="Polar residues" evidence="3">
    <location>
        <begin position="713"/>
        <end position="737"/>
    </location>
</feature>
<feature type="modified residue" description="Phosphoserine" evidence="7">
    <location>
        <position position="519"/>
    </location>
</feature>
<feature type="modified residue" description="Phosphoserine" evidence="7 8">
    <location>
        <position position="762"/>
    </location>
</feature>
<feature type="glycosylation site" description="N-linked (GlcNAc...) asparagine" evidence="1">
    <location>
        <position position="109"/>
    </location>
</feature>
<feature type="glycosylation site" description="N-linked (GlcNAc...) asparagine" evidence="1">
    <location>
        <position position="212"/>
    </location>
</feature>
<feature type="glycosylation site" description="N-linked (GlcNAc...) asparagine" evidence="1">
    <location>
        <position position="337"/>
    </location>
</feature>
<feature type="glycosylation site" description="N-linked (GlcNAc...) asparagine" evidence="1">
    <location>
        <position position="383"/>
    </location>
</feature>
<feature type="glycosylation site" description="N-linked (GlcNAc...) asparagine" evidence="1">
    <location>
        <position position="784"/>
    </location>
</feature>
<feature type="glycosylation site" description="N-linked (GlcNAc...) asparagine" evidence="1">
    <location>
        <position position="796"/>
    </location>
</feature>
<feature type="sequence conflict" description="In Ref. 1; CAA81388." evidence="5" ref="1">
    <original>P</original>
    <variation>R</variation>
    <location>
        <position position="308"/>
    </location>
</feature>
<feature type="sequence conflict" description="In Ref. 1; CAA81388." evidence="5" ref="1">
    <original>A</original>
    <variation>R</variation>
    <location>
        <position position="350"/>
    </location>
</feature>
<feature type="sequence conflict" description="In Ref. 1; CAA81388." evidence="5" ref="1">
    <original>V</original>
    <variation>E</variation>
    <location>
        <position position="689"/>
    </location>
</feature>
<feature type="sequence conflict" description="In Ref. 1." evidence="5" ref="1">
    <original>PSTMDTGTSNSPSKNLKQRLFSTGGSTLQHKHNTHTNQPDVDVGRYTIGGSNSIVGAKSGNERIVIDDSRFKWTNVSQMPKPRPFQNKTKLYPSGKGSSVPLDLTLFT</original>
    <variation>HLRWIPVPLIAPVKTLNNGYFLQVDRRCNTSIIRIQINQMLM</variation>
    <location>
        <begin position="710"/>
        <end position="817"/>
    </location>
</feature>
<gene>
    <name type="primary">VRP1</name>
    <name type="synonym">END5</name>
    <name type="synonym">MDP2</name>
    <name type="ordered locus">YLR337C</name>
    <name type="ORF">L8300.13</name>
</gene>
<reference key="1">
    <citation type="journal article" date="1993" name="Mol. Microbiol.">
        <title>A proline-rich protein, verprolin, involved in cytoskeletal organization and cellular growth in the yeast Saccharomyces cerevisiae.</title>
        <authorList>
            <person name="Donnelly S.F.H."/>
            <person name="Pocklington M.J."/>
            <person name="Pallota D."/>
            <person name="Orr E."/>
        </authorList>
    </citation>
    <scope>NUCLEOTIDE SEQUENCE [GENOMIC DNA]</scope>
    <source>
        <strain>A364</strain>
    </source>
</reference>
<reference key="2">
    <citation type="journal article" date="1997" name="Nature">
        <title>The nucleotide sequence of Saccharomyces cerevisiae chromosome XII.</title>
        <authorList>
            <person name="Johnston M."/>
            <person name="Hillier L.W."/>
            <person name="Riles L."/>
            <person name="Albermann K."/>
            <person name="Andre B."/>
            <person name="Ansorge W."/>
            <person name="Benes V."/>
            <person name="Brueckner M."/>
            <person name="Delius H."/>
            <person name="Dubois E."/>
            <person name="Duesterhoeft A."/>
            <person name="Entian K.-D."/>
            <person name="Floeth M."/>
            <person name="Goffeau A."/>
            <person name="Hebling U."/>
            <person name="Heumann K."/>
            <person name="Heuss-Neitzel D."/>
            <person name="Hilbert H."/>
            <person name="Hilger F."/>
            <person name="Kleine K."/>
            <person name="Koetter P."/>
            <person name="Louis E.J."/>
            <person name="Messenguy F."/>
            <person name="Mewes H.-W."/>
            <person name="Miosga T."/>
            <person name="Moestl D."/>
            <person name="Mueller-Auer S."/>
            <person name="Nentwich U."/>
            <person name="Obermaier B."/>
            <person name="Piravandi E."/>
            <person name="Pohl T.M."/>
            <person name="Portetelle D."/>
            <person name="Purnelle B."/>
            <person name="Rechmann S."/>
            <person name="Rieger M."/>
            <person name="Rinke M."/>
            <person name="Rose M."/>
            <person name="Scharfe M."/>
            <person name="Scherens B."/>
            <person name="Scholler P."/>
            <person name="Schwager C."/>
            <person name="Schwarz S."/>
            <person name="Underwood A.P."/>
            <person name="Urrestarazu L.A."/>
            <person name="Vandenbol M."/>
            <person name="Verhasselt P."/>
            <person name="Vierendeels F."/>
            <person name="Voet M."/>
            <person name="Volckaert G."/>
            <person name="Voss H."/>
            <person name="Wambutt R."/>
            <person name="Wedler E."/>
            <person name="Wedler H."/>
            <person name="Zimmermann F.K."/>
            <person name="Zollner A."/>
            <person name="Hani J."/>
            <person name="Hoheisel J.D."/>
        </authorList>
    </citation>
    <scope>NUCLEOTIDE SEQUENCE [LARGE SCALE GENOMIC DNA]</scope>
    <source>
        <strain>ATCC 204508 / S288c</strain>
    </source>
</reference>
<reference key="3">
    <citation type="journal article" date="2014" name="G3 (Bethesda)">
        <title>The reference genome sequence of Saccharomyces cerevisiae: Then and now.</title>
        <authorList>
            <person name="Engel S.R."/>
            <person name="Dietrich F.S."/>
            <person name="Fisk D.G."/>
            <person name="Binkley G."/>
            <person name="Balakrishnan R."/>
            <person name="Costanzo M.C."/>
            <person name="Dwight S.S."/>
            <person name="Hitz B.C."/>
            <person name="Karra K."/>
            <person name="Nash R.S."/>
            <person name="Weng S."/>
            <person name="Wong E.D."/>
            <person name="Lloyd P."/>
            <person name="Skrzypek M.S."/>
            <person name="Miyasato S.R."/>
            <person name="Simison M."/>
            <person name="Cherry J.M."/>
        </authorList>
    </citation>
    <scope>GENOME REANNOTATION</scope>
    <source>
        <strain>ATCC 204508 / S288c</strain>
    </source>
</reference>
<reference key="4">
    <citation type="journal article" date="2003" name="Nature">
        <title>Global analysis of protein localization in budding yeast.</title>
        <authorList>
            <person name="Huh W.-K."/>
            <person name="Falvo J.V."/>
            <person name="Gerke L.C."/>
            <person name="Carroll A.S."/>
            <person name="Howson R.W."/>
            <person name="Weissman J.S."/>
            <person name="O'Shea E.K."/>
        </authorList>
    </citation>
    <scope>SUBCELLULAR LOCATION [LARGE SCALE ANALYSIS]</scope>
</reference>
<reference key="5">
    <citation type="journal article" date="2008" name="Mol. Cell. Proteomics">
        <title>A multidimensional chromatography technology for in-depth phosphoproteome analysis.</title>
        <authorList>
            <person name="Albuquerque C.P."/>
            <person name="Smolka M.B."/>
            <person name="Payne S.H."/>
            <person name="Bafna V."/>
            <person name="Eng J."/>
            <person name="Zhou H."/>
        </authorList>
    </citation>
    <scope>PHOSPHORYLATION [LARGE SCALE ANALYSIS] AT SER-519 AND SER-762</scope>
    <scope>IDENTIFICATION BY MASS SPECTROMETRY [LARGE SCALE ANALYSIS]</scope>
</reference>
<reference key="6">
    <citation type="journal article" date="2009" name="Mol. Syst. Biol.">
        <title>Global analysis of the glycoproteome in Saccharomyces cerevisiae reveals new roles for protein glycosylation in eukaryotes.</title>
        <authorList>
            <person name="Kung L.A."/>
            <person name="Tao S.-C."/>
            <person name="Qian J."/>
            <person name="Smith M.G."/>
            <person name="Snyder M."/>
            <person name="Zhu H."/>
        </authorList>
    </citation>
    <scope>GLYCOSYLATION [LARGE SCALE ANALYSIS]</scope>
</reference>
<reference key="7">
    <citation type="journal article" date="2009" name="Science">
        <title>Global analysis of Cdk1 substrate phosphorylation sites provides insights into evolution.</title>
        <authorList>
            <person name="Holt L.J."/>
            <person name="Tuch B.B."/>
            <person name="Villen J."/>
            <person name="Johnson A.D."/>
            <person name="Gygi S.P."/>
            <person name="Morgan D.O."/>
        </authorList>
    </citation>
    <scope>PHOSPHORYLATION [LARGE SCALE ANALYSIS] AT SER-762</scope>
    <scope>IDENTIFICATION BY MASS SPECTROMETRY [LARGE SCALE ANALYSIS]</scope>
</reference>
<sequence>MAGAPAPPPPPPPPALGGSAPKPAKSVMQGRDALLGDIRKGMKLKKAETNDRSAPIVGGGVVSSASGSSGTVSSKGPSMSAPPIPGMGAPQLGDILAGGIPKLKHINNNASTKPSPSASAPPIPGAVPSVAAPPIPNAPLSPAPAVPSIPSSSAPPIPDIPSSAAPPIPIVPSSPAPPLPLSGASAPKVPQNRPHMPSVRPAHRSHQRKSSNISLPSVSAPPLPSASLPTHVSNPPQAPPPPPTPTIGLDSKNIKPTDNAVSPPSSEVPAGGLPFLAEINARRSERGAVEGVSSTKIQTENHKSPSQPPLPSSAPPIPTSHAPPLPPTAPPPPSLPNVTSAPKKATSAPAPPPPPLPAAMSSASTNSVKATPVPPTLAPPLPNTTSVPPNKASSMPAPPPPPPPPPGAFSTSSALSASSIPLAPLPPPPPPSVATSVPSAPPPPPTLTTNKPSASSKQSKISSSSSSSAVTPGGPLPFLAEIQKKRDDRFVVGGDTGYTTQDKQEDVIGSSKDDNVRPSPISPSINPPKQSSQNGMSFLDEIESKLHKQTSSNAFNAPPPHTDAMAPPLPPSAPPPPITSLPTPTASGDDHTNDKSETVLGMKKAKAPALPGHVPPPPVPPVLSDDSKNNVPAASLLHDVLPSSNLEKPPSPPVAAAPPLPTFSAPSLPQQSVSTSIPSPPPVAPTLSVRTETESISKNPTKSPPPPPSPSTMDTGTSNSPSKNLKQRLFSTGGSTLQHKHNTHTNQPDVDVGRYTIGGSNSIVGAKSGNERIVIDDSRFKWTNVSQMPKPRPFQNKTKLYPSGKGSSVPLDLTLFT</sequence>
<dbReference type="EMBL" id="Z26645">
    <property type="protein sequence ID" value="CAA81388.1"/>
    <property type="molecule type" value="Genomic_DNA"/>
</dbReference>
<dbReference type="EMBL" id="U19028">
    <property type="protein sequence ID" value="AAB67263.1"/>
    <property type="molecule type" value="Genomic_DNA"/>
</dbReference>
<dbReference type="EMBL" id="BK006945">
    <property type="protein sequence ID" value="DAA09643.1"/>
    <property type="molecule type" value="Genomic_DNA"/>
</dbReference>
<dbReference type="PIR" id="S51342">
    <property type="entry name" value="S51342"/>
</dbReference>
<dbReference type="RefSeq" id="NP_013441.1">
    <property type="nucleotide sequence ID" value="NM_001182226.1"/>
</dbReference>
<dbReference type="BioGRID" id="31601">
    <property type="interactions" value="665"/>
</dbReference>
<dbReference type="DIP" id="DIP-860N"/>
<dbReference type="ELM" id="P37370"/>
<dbReference type="FunCoup" id="P37370">
    <property type="interactions" value="124"/>
</dbReference>
<dbReference type="IntAct" id="P37370">
    <property type="interactions" value="31"/>
</dbReference>
<dbReference type="MINT" id="P37370"/>
<dbReference type="STRING" id="4932.YLR337C"/>
<dbReference type="MoonDB" id="P37370">
    <property type="type" value="Predicted"/>
</dbReference>
<dbReference type="GlyCosmos" id="P37370">
    <property type="glycosylation" value="6 sites, No reported glycans"/>
</dbReference>
<dbReference type="GlyGen" id="P37370">
    <property type="glycosylation" value="13 sites, 1 O-linked glycan (3 sites)"/>
</dbReference>
<dbReference type="iPTMnet" id="P37370"/>
<dbReference type="PaxDb" id="4932-YLR337C"/>
<dbReference type="PeptideAtlas" id="P37370"/>
<dbReference type="EnsemblFungi" id="YLR337C_mRNA">
    <property type="protein sequence ID" value="YLR337C"/>
    <property type="gene ID" value="YLR337C"/>
</dbReference>
<dbReference type="GeneID" id="851051"/>
<dbReference type="KEGG" id="sce:YLR337C"/>
<dbReference type="AGR" id="SGD:S000004329"/>
<dbReference type="SGD" id="S000004329">
    <property type="gene designation" value="VRP1"/>
</dbReference>
<dbReference type="VEuPathDB" id="FungiDB:YLR337C"/>
<dbReference type="eggNOG" id="KOG4462">
    <property type="taxonomic scope" value="Eukaryota"/>
</dbReference>
<dbReference type="GeneTree" id="ENSGT00940000171387"/>
<dbReference type="HOGENOM" id="CLU_386454_0_0_1"/>
<dbReference type="InParanoid" id="P37370"/>
<dbReference type="OMA" id="YAATGIW"/>
<dbReference type="OrthoDB" id="2430277at2759"/>
<dbReference type="BioCyc" id="YEAST:G3O-32416-MONOMER"/>
<dbReference type="BioGRID-ORCS" id="851051">
    <property type="hits" value="10 hits in 10 CRISPR screens"/>
</dbReference>
<dbReference type="PRO" id="PR:P37370"/>
<dbReference type="Proteomes" id="UP000002311">
    <property type="component" value="Chromosome XII"/>
</dbReference>
<dbReference type="RNAct" id="P37370">
    <property type="molecule type" value="protein"/>
</dbReference>
<dbReference type="GO" id="GO:0030479">
    <property type="term" value="C:actin cortical patch"/>
    <property type="evidence" value="ECO:0000314"/>
    <property type="project" value="SGD"/>
</dbReference>
<dbReference type="GO" id="GO:0005935">
    <property type="term" value="C:cellular bud neck"/>
    <property type="evidence" value="ECO:0000314"/>
    <property type="project" value="SGD"/>
</dbReference>
<dbReference type="GO" id="GO:0000131">
    <property type="term" value="C:incipient cellular bud site"/>
    <property type="evidence" value="ECO:0000314"/>
    <property type="project" value="SGD"/>
</dbReference>
<dbReference type="GO" id="GO:0043332">
    <property type="term" value="C:mating projection tip"/>
    <property type="evidence" value="ECO:0007005"/>
    <property type="project" value="SGD"/>
</dbReference>
<dbReference type="GO" id="GO:0003779">
    <property type="term" value="F:actin binding"/>
    <property type="evidence" value="ECO:0000353"/>
    <property type="project" value="SGD"/>
</dbReference>
<dbReference type="GO" id="GO:0051666">
    <property type="term" value="P:actin cortical patch localization"/>
    <property type="evidence" value="ECO:0000315"/>
    <property type="project" value="SGD"/>
</dbReference>
<dbReference type="GO" id="GO:0007121">
    <property type="term" value="P:bipolar cellular bud site selection"/>
    <property type="evidence" value="ECO:0000315"/>
    <property type="project" value="SGD"/>
</dbReference>
<dbReference type="GO" id="GO:0006897">
    <property type="term" value="P:endocytosis"/>
    <property type="evidence" value="ECO:0000315"/>
    <property type="project" value="SGD"/>
</dbReference>
<dbReference type="GO" id="GO:2000601">
    <property type="term" value="P:positive regulation of Arp2/3 complex-mediated actin nucleation"/>
    <property type="evidence" value="ECO:0000314"/>
    <property type="project" value="SGD"/>
</dbReference>
<dbReference type="GO" id="GO:0032465">
    <property type="term" value="P:regulation of cytokinesis"/>
    <property type="evidence" value="ECO:0000315"/>
    <property type="project" value="SGD"/>
</dbReference>
<dbReference type="CDD" id="cd22064">
    <property type="entry name" value="WH2_WAS_WASL"/>
    <property type="match status" value="1"/>
</dbReference>
<dbReference type="InterPro" id="IPR003124">
    <property type="entry name" value="WH2_dom"/>
</dbReference>
<dbReference type="Pfam" id="PF02205">
    <property type="entry name" value="WH2"/>
    <property type="match status" value="2"/>
</dbReference>
<dbReference type="SMART" id="SM00246">
    <property type="entry name" value="WH2"/>
    <property type="match status" value="2"/>
</dbReference>
<dbReference type="PROSITE" id="PS51082">
    <property type="entry name" value="WH2"/>
    <property type="match status" value="2"/>
</dbReference>
<evidence type="ECO:0000255" key="1"/>
<evidence type="ECO:0000255" key="2">
    <source>
        <dbReference type="PROSITE-ProRule" id="PRU00406"/>
    </source>
</evidence>
<evidence type="ECO:0000256" key="3">
    <source>
        <dbReference type="SAM" id="MobiDB-lite"/>
    </source>
</evidence>
<evidence type="ECO:0000269" key="4">
    <source>
    </source>
</evidence>
<evidence type="ECO:0000305" key="5"/>
<evidence type="ECO:0000305" key="6">
    <source>
    </source>
</evidence>
<evidence type="ECO:0007744" key="7">
    <source>
    </source>
</evidence>
<evidence type="ECO:0007744" key="8">
    <source>
    </source>
</evidence>
<proteinExistence type="evidence at protein level"/>
<comment type="function">
    <text>Involved in cytoskeletal organization and cellular growth. May exert its effects on the cytoskeleton directly, or indirectly via proline-binding proteins (e.g. profilin) or proteins possessing SH3 domains.</text>
</comment>
<comment type="interaction">
    <interactant intactId="EBI-20502">
        <id>P37370</id>
    </interactant>
    <interactant intactId="EBI-2764">
        <id>Q05933</id>
        <label>ARC18</label>
    </interactant>
    <organismsDiffer>false</organismsDiffer>
    <experiments>3</experiments>
</comment>
<comment type="interaction">
    <interactant intactId="EBI-20502">
        <id>P37370</id>
    </interactant>
    <interactant intactId="EBI-2770">
        <id>P53731</id>
        <label>ARC35</label>
    </interactant>
    <organismsDiffer>false</organismsDiffer>
    <experiments>3</experiments>
</comment>
<comment type="interaction">
    <interactant intactId="EBI-20502">
        <id>P37370</id>
    </interactant>
    <interactant intactId="EBI-5412">
        <id>Q05080</id>
        <label>HOF1</label>
    </interactant>
    <organismsDiffer>false</organismsDiffer>
    <experiments>4</experiments>
</comment>
<comment type="interaction">
    <interactant intactId="EBI-20502">
        <id>P37370</id>
    </interactant>
    <interactant intactId="EBI-10022">
        <id>Q12446</id>
        <label>LAS17</label>
    </interactant>
    <organismsDiffer>false</organismsDiffer>
    <experiments>7</experiments>
</comment>
<comment type="interaction">
    <interactant intactId="EBI-20502">
        <id>P37370</id>
    </interactant>
    <interactant intactId="EBI-11670">
        <id>P36006</id>
        <label>MYO3</label>
    </interactant>
    <organismsDiffer>false</organismsDiffer>
    <experiments>12</experiments>
</comment>
<comment type="interaction">
    <interactant intactId="EBI-20502">
        <id>P37370</id>
    </interactant>
    <interactant intactId="EBI-11687">
        <id>Q04439</id>
        <label>MYO5</label>
    </interactant>
    <organismsDiffer>false</organismsDiffer>
    <experiments>20</experiments>
</comment>
<comment type="interaction">
    <interactant intactId="EBI-20502">
        <id>P37370</id>
    </interactant>
    <interactant intactId="EBI-14500">
        <id>P39743</id>
        <label>RVS167</label>
    </interactant>
    <organismsDiffer>false</organismsDiffer>
    <experiments>3</experiments>
</comment>
<comment type="interaction">
    <interactant intactId="EBI-20502">
        <id>P37370</id>
    </interactant>
    <interactant intactId="EBI-17313">
        <id>P32790</id>
        <label>SLA1</label>
    </interactant>
    <organismsDiffer>false</organismsDiffer>
    <experiments>3</experiments>
</comment>
<comment type="subcellular location">
    <subcellularLocation>
        <location evidence="6">Cytoplasm</location>
        <location evidence="6">Cytoskeleton</location>
    </subcellularLocation>
</comment>
<comment type="PTM">
    <text evidence="4">N-glycosylated.</text>
</comment>
<comment type="similarity">
    <text evidence="5">Belongs to the verprolin family.</text>
</comment>
<name>VRP1_YEAST</name>